<sequence>MTNRKDDHIKYALKYQSPYNAFDDIELIHHSLPSYDLSDIDLSTHFAGQDFDFPFYINAMTGGSQKGKAVNEKLAKVAAATGIVMVTGSYSAALKNPNDDSYRLHEVADNLKLATNIGLDKPVALGQQTVQEMQPLFLQVHVNVMQELLMPEGERVFHTWKKHLAEYASQIPVPVILKEVGFGMDVNSIKLAHDLGIQTFDISGRGGTSFAYIENQRGGDRSYLNDWGQTTVQCLLNAQGLMDQVEILASGGVRHPLDMIKCFVLGARAVGLSRTVLELVEKYPTERVIAIVNGWKEELKIIMCALDCKTIKELKGVDYLLYGRLQQVN</sequence>
<evidence type="ECO:0000255" key="1">
    <source>
        <dbReference type="HAMAP-Rule" id="MF_00354"/>
    </source>
</evidence>
<accession>P65103</accession>
<accession>Q48ZB5</accession>
<accession>Q9A095</accession>
<proteinExistence type="inferred from homology"/>
<keyword id="KW-0963">Cytoplasm</keyword>
<keyword id="KW-0285">Flavoprotein</keyword>
<keyword id="KW-0288">FMN</keyword>
<keyword id="KW-0413">Isomerase</keyword>
<keyword id="KW-0414">Isoprene biosynthesis</keyword>
<keyword id="KW-0460">Magnesium</keyword>
<keyword id="KW-0479">Metal-binding</keyword>
<keyword id="KW-0521">NADP</keyword>
<keyword id="KW-1185">Reference proteome</keyword>
<comment type="function">
    <text evidence="1">Involved in the biosynthesis of isoprenoids. Catalyzes the 1,3-allylic rearrangement of the homoallylic substrate isopentenyl (IPP) to its allylic isomer, dimethylallyl diphosphate (DMAPP).</text>
</comment>
<comment type="catalytic activity">
    <reaction evidence="1">
        <text>isopentenyl diphosphate = dimethylallyl diphosphate</text>
        <dbReference type="Rhea" id="RHEA:23284"/>
        <dbReference type="ChEBI" id="CHEBI:57623"/>
        <dbReference type="ChEBI" id="CHEBI:128769"/>
        <dbReference type="EC" id="5.3.3.2"/>
    </reaction>
</comment>
<comment type="cofactor">
    <cofactor evidence="1">
        <name>FMN</name>
        <dbReference type="ChEBI" id="CHEBI:58210"/>
    </cofactor>
</comment>
<comment type="cofactor">
    <cofactor evidence="1">
        <name>NADPH</name>
        <dbReference type="ChEBI" id="CHEBI:57783"/>
    </cofactor>
</comment>
<comment type="cofactor">
    <cofactor evidence="1">
        <name>Mg(2+)</name>
        <dbReference type="ChEBI" id="CHEBI:18420"/>
    </cofactor>
</comment>
<comment type="subunit">
    <text evidence="1">Homooctamer. Dimer of tetramers.</text>
</comment>
<comment type="subcellular location">
    <subcellularLocation>
        <location evidence="1">Cytoplasm</location>
    </subcellularLocation>
</comment>
<comment type="similarity">
    <text evidence="1">Belongs to the IPP isomerase type 2 family.</text>
</comment>
<name>IDI2_STRP1</name>
<protein>
    <recommendedName>
        <fullName evidence="1">Isopentenyl-diphosphate delta-isomerase</fullName>
        <shortName evidence="1">IPP isomerase</shortName>
        <ecNumber evidence="1">5.3.3.2</ecNumber>
    </recommendedName>
    <alternativeName>
        <fullName evidence="1">Isopentenyl diphosphate:dimethylallyl diphosphate isomerase</fullName>
    </alternativeName>
    <alternativeName>
        <fullName evidence="1">Isopentenyl pyrophosphate isomerase</fullName>
    </alternativeName>
    <alternativeName>
        <fullName evidence="1">Type 2 isopentenyl diphosphate isomerase</fullName>
        <shortName evidence="1">IDI-2</shortName>
    </alternativeName>
</protein>
<dbReference type="EC" id="5.3.3.2" evidence="1"/>
<dbReference type="EMBL" id="AE004092">
    <property type="protein sequence ID" value="AAK33799.1"/>
    <property type="molecule type" value="Genomic_DNA"/>
</dbReference>
<dbReference type="EMBL" id="CP000017">
    <property type="protein sequence ID" value="AAZ51303.1"/>
    <property type="molecule type" value="Genomic_DNA"/>
</dbReference>
<dbReference type="RefSeq" id="NP_269078.1">
    <property type="nucleotide sequence ID" value="NC_002737.2"/>
</dbReference>
<dbReference type="SMR" id="P65103"/>
<dbReference type="PaxDb" id="1314-HKU360_00693"/>
<dbReference type="KEGG" id="spy:SPy_0879"/>
<dbReference type="KEGG" id="spz:M5005_Spy0685"/>
<dbReference type="PATRIC" id="fig|160490.10.peg.755"/>
<dbReference type="HOGENOM" id="CLU_065515_0_0_9"/>
<dbReference type="OMA" id="WDWGIPT"/>
<dbReference type="Proteomes" id="UP000000750">
    <property type="component" value="Chromosome"/>
</dbReference>
<dbReference type="GO" id="GO:0005737">
    <property type="term" value="C:cytoplasm"/>
    <property type="evidence" value="ECO:0007669"/>
    <property type="project" value="UniProtKB-SubCell"/>
</dbReference>
<dbReference type="GO" id="GO:0010181">
    <property type="term" value="F:FMN binding"/>
    <property type="evidence" value="ECO:0007669"/>
    <property type="project" value="UniProtKB-UniRule"/>
</dbReference>
<dbReference type="GO" id="GO:0004452">
    <property type="term" value="F:isopentenyl-diphosphate delta-isomerase activity"/>
    <property type="evidence" value="ECO:0007669"/>
    <property type="project" value="UniProtKB-UniRule"/>
</dbReference>
<dbReference type="GO" id="GO:0000287">
    <property type="term" value="F:magnesium ion binding"/>
    <property type="evidence" value="ECO:0007669"/>
    <property type="project" value="UniProtKB-UniRule"/>
</dbReference>
<dbReference type="GO" id="GO:0070402">
    <property type="term" value="F:NADPH binding"/>
    <property type="evidence" value="ECO:0007669"/>
    <property type="project" value="UniProtKB-UniRule"/>
</dbReference>
<dbReference type="GO" id="GO:0016491">
    <property type="term" value="F:oxidoreductase activity"/>
    <property type="evidence" value="ECO:0007669"/>
    <property type="project" value="InterPro"/>
</dbReference>
<dbReference type="GO" id="GO:0008299">
    <property type="term" value="P:isoprenoid biosynthetic process"/>
    <property type="evidence" value="ECO:0007669"/>
    <property type="project" value="UniProtKB-UniRule"/>
</dbReference>
<dbReference type="CDD" id="cd02811">
    <property type="entry name" value="IDI-2_FMN"/>
    <property type="match status" value="1"/>
</dbReference>
<dbReference type="Gene3D" id="3.20.20.70">
    <property type="entry name" value="Aldolase class I"/>
    <property type="match status" value="1"/>
</dbReference>
<dbReference type="HAMAP" id="MF_00354">
    <property type="entry name" value="Idi_2"/>
    <property type="match status" value="1"/>
</dbReference>
<dbReference type="InterPro" id="IPR013785">
    <property type="entry name" value="Aldolase_TIM"/>
</dbReference>
<dbReference type="InterPro" id="IPR000262">
    <property type="entry name" value="FMN-dep_DH"/>
</dbReference>
<dbReference type="InterPro" id="IPR011179">
    <property type="entry name" value="IPdP_isomerase"/>
</dbReference>
<dbReference type="NCBIfam" id="TIGR02151">
    <property type="entry name" value="IPP_isom_2"/>
    <property type="match status" value="1"/>
</dbReference>
<dbReference type="PANTHER" id="PTHR43665">
    <property type="entry name" value="ISOPENTENYL-DIPHOSPHATE DELTA-ISOMERASE"/>
    <property type="match status" value="1"/>
</dbReference>
<dbReference type="PANTHER" id="PTHR43665:SF1">
    <property type="entry name" value="ISOPENTENYL-DIPHOSPHATE DELTA-ISOMERASE"/>
    <property type="match status" value="1"/>
</dbReference>
<dbReference type="Pfam" id="PF01070">
    <property type="entry name" value="FMN_dh"/>
    <property type="match status" value="2"/>
</dbReference>
<dbReference type="PIRSF" id="PIRSF003314">
    <property type="entry name" value="IPP_isomerase"/>
    <property type="match status" value="1"/>
</dbReference>
<dbReference type="SUPFAM" id="SSF51395">
    <property type="entry name" value="FMN-linked oxidoreductases"/>
    <property type="match status" value="1"/>
</dbReference>
<reference key="1">
    <citation type="journal article" date="2001" name="Proc. Natl. Acad. Sci. U.S.A.">
        <title>Complete genome sequence of an M1 strain of Streptococcus pyogenes.</title>
        <authorList>
            <person name="Ferretti J.J."/>
            <person name="McShan W.M."/>
            <person name="Ajdic D.J."/>
            <person name="Savic D.J."/>
            <person name="Savic G."/>
            <person name="Lyon K."/>
            <person name="Primeaux C."/>
            <person name="Sezate S."/>
            <person name="Suvorov A.N."/>
            <person name="Kenton S."/>
            <person name="Lai H.S."/>
            <person name="Lin S.P."/>
            <person name="Qian Y."/>
            <person name="Jia H.G."/>
            <person name="Najar F.Z."/>
            <person name="Ren Q."/>
            <person name="Zhu H."/>
            <person name="Song L."/>
            <person name="White J."/>
            <person name="Yuan X."/>
            <person name="Clifton S.W."/>
            <person name="Roe B.A."/>
            <person name="McLaughlin R.E."/>
        </authorList>
    </citation>
    <scope>NUCLEOTIDE SEQUENCE [LARGE SCALE GENOMIC DNA]</scope>
    <source>
        <strain>ATCC 700294 / SF370 / Serotype M1</strain>
    </source>
</reference>
<reference key="2">
    <citation type="journal article" date="2005" name="J. Infect. Dis.">
        <title>Evolutionary origin and emergence of a highly successful clone of serotype M1 group A Streptococcus involved multiple horizontal gene transfer events.</title>
        <authorList>
            <person name="Sumby P."/>
            <person name="Porcella S.F."/>
            <person name="Madrigal A.G."/>
            <person name="Barbian K.D."/>
            <person name="Virtaneva K."/>
            <person name="Ricklefs S.M."/>
            <person name="Sturdevant D.E."/>
            <person name="Graham M.R."/>
            <person name="Vuopio-Varkila J."/>
            <person name="Hoe N.P."/>
            <person name="Musser J.M."/>
        </authorList>
    </citation>
    <scope>NUCLEOTIDE SEQUENCE [LARGE SCALE GENOMIC DNA]</scope>
    <source>
        <strain>ATCC BAA-947 / MGAS5005 / Serotype M1</strain>
    </source>
</reference>
<organism>
    <name type="scientific">Streptococcus pyogenes serotype M1</name>
    <dbReference type="NCBI Taxonomy" id="301447"/>
    <lineage>
        <taxon>Bacteria</taxon>
        <taxon>Bacillati</taxon>
        <taxon>Bacillota</taxon>
        <taxon>Bacilli</taxon>
        <taxon>Lactobacillales</taxon>
        <taxon>Streptococcaceae</taxon>
        <taxon>Streptococcus</taxon>
    </lineage>
</organism>
<feature type="chain" id="PRO_0000134433" description="Isopentenyl-diphosphate delta-isomerase">
    <location>
        <begin position="1"/>
        <end position="329"/>
    </location>
</feature>
<feature type="binding site" evidence="1">
    <location>
        <begin position="4"/>
        <end position="5"/>
    </location>
    <ligand>
        <name>substrate</name>
    </ligand>
</feature>
<feature type="binding site" evidence="1">
    <location>
        <begin position="59"/>
        <end position="61"/>
    </location>
    <ligand>
        <name>FMN</name>
        <dbReference type="ChEBI" id="CHEBI:58210"/>
    </ligand>
</feature>
<feature type="binding site" evidence="1">
    <location>
        <position position="89"/>
    </location>
    <ligand>
        <name>FMN</name>
        <dbReference type="ChEBI" id="CHEBI:58210"/>
    </ligand>
</feature>
<feature type="binding site" evidence="1">
    <location>
        <position position="116"/>
    </location>
    <ligand>
        <name>FMN</name>
        <dbReference type="ChEBI" id="CHEBI:58210"/>
    </ligand>
</feature>
<feature type="binding site" evidence="1">
    <location>
        <position position="146"/>
    </location>
    <ligand>
        <name>substrate</name>
    </ligand>
</feature>
<feature type="binding site" evidence="1">
    <location>
        <position position="147"/>
    </location>
    <ligand>
        <name>Mg(2+)</name>
        <dbReference type="ChEBI" id="CHEBI:18420"/>
    </ligand>
</feature>
<feature type="binding site" evidence="1">
    <location>
        <position position="178"/>
    </location>
    <ligand>
        <name>FMN</name>
        <dbReference type="ChEBI" id="CHEBI:58210"/>
    </ligand>
</feature>
<feature type="binding site" evidence="1">
    <location>
        <position position="203"/>
    </location>
    <ligand>
        <name>FMN</name>
        <dbReference type="ChEBI" id="CHEBI:58210"/>
    </ligand>
</feature>
<feature type="binding site" evidence="1">
    <location>
        <position position="208"/>
    </location>
    <ligand>
        <name>FMN</name>
        <dbReference type="ChEBI" id="CHEBI:58210"/>
    </ligand>
</feature>
<feature type="binding site" evidence="1">
    <location>
        <begin position="252"/>
        <end position="254"/>
    </location>
    <ligand>
        <name>FMN</name>
        <dbReference type="ChEBI" id="CHEBI:58210"/>
    </ligand>
</feature>
<feature type="binding site" evidence="1">
    <location>
        <begin position="273"/>
        <end position="274"/>
    </location>
    <ligand>
        <name>FMN</name>
        <dbReference type="ChEBI" id="CHEBI:58210"/>
    </ligand>
</feature>
<gene>
    <name evidence="1" type="primary">fni</name>
    <name type="ordered locus">SPy_0879</name>
    <name type="ordered locus">M5005_Spy0685</name>
</gene>